<geneLocation type="mitochondrion"/>
<feature type="chain" id="PRO_0000183312" description="Cytochrome c oxidase subunit 1">
    <location>
        <begin position="1" status="less than"/>
        <end position="274"/>
    </location>
</feature>
<feature type="transmembrane region" description="Helical" evidence="3">
    <location>
        <begin position="28"/>
        <end position="48"/>
    </location>
</feature>
<feature type="transmembrane region" description="Helical" evidence="3">
    <location>
        <begin position="65"/>
        <end position="85"/>
    </location>
</feature>
<feature type="transmembrane region" description="Helical" evidence="3">
    <location>
        <begin position="98"/>
        <end position="118"/>
    </location>
</feature>
<feature type="transmembrane region" description="Helical" evidence="3">
    <location>
        <begin position="140"/>
        <end position="160"/>
    </location>
</feature>
<feature type="transmembrane region" description="Helical" evidence="3">
    <location>
        <begin position="174"/>
        <end position="194"/>
    </location>
</feature>
<feature type="transmembrane region" description="Helical" evidence="3">
    <location>
        <begin position="212"/>
        <end position="232"/>
    </location>
</feature>
<feature type="binding site" evidence="1">
    <location>
        <position position="4"/>
    </location>
    <ligand>
        <name>O2</name>
        <dbReference type="ChEBI" id="CHEBI:15379"/>
    </ligand>
</feature>
<feature type="binding site" evidence="2">
    <location>
        <position position="50"/>
    </location>
    <ligand>
        <name>Cu cation</name>
        <dbReference type="ChEBI" id="CHEBI:23378"/>
        <label>B</label>
    </ligand>
</feature>
<feature type="binding site" evidence="2">
    <location>
        <position position="51"/>
    </location>
    <ligand>
        <name>Cu cation</name>
        <dbReference type="ChEBI" id="CHEBI:23378"/>
        <label>B</label>
    </ligand>
</feature>
<feature type="binding site" evidence="2">
    <location>
        <position position="128"/>
    </location>
    <ligand>
        <name>Mg(2+)</name>
        <dbReference type="ChEBI" id="CHEBI:18420"/>
        <note>ligand shared with subunit 2</note>
    </ligand>
</feature>
<feature type="binding site" evidence="2">
    <location>
        <position position="129"/>
    </location>
    <ligand>
        <name>Mg(2+)</name>
        <dbReference type="ChEBI" id="CHEBI:18420"/>
        <note>ligand shared with subunit 2</note>
    </ligand>
</feature>
<feature type="binding site" description="axial binding residue" evidence="2">
    <location>
        <position position="136"/>
    </location>
    <ligand>
        <name>heme a3</name>
        <dbReference type="ChEBI" id="CHEBI:83282"/>
        <note>high-spin</note>
    </ligand>
    <ligandPart>
        <name>Fe</name>
        <dbReference type="ChEBI" id="CHEBI:18248"/>
    </ligandPart>
</feature>
<feature type="binding site" description="axial binding residue" evidence="2">
    <location>
        <position position="138"/>
    </location>
    <ligand>
        <name>Fe(II)-heme a</name>
        <dbReference type="ChEBI" id="CHEBI:61715"/>
        <note>low-spin</note>
    </ligand>
    <ligandPart>
        <name>Fe</name>
        <dbReference type="ChEBI" id="CHEBI:18248"/>
    </ligandPart>
</feature>
<feature type="non-terminal residue">
    <location>
        <position position="1"/>
    </location>
</feature>
<reference key="1">
    <citation type="journal article" date="1994" name="Mol. Biol. Evol.">
        <title>Mitochondrial DNA sequence variation in the spruce budworm species complex (Choristoneura: Lepidoptera).</title>
        <authorList>
            <person name="Sperling F.A.H."/>
            <person name="Hickey D.A."/>
        </authorList>
    </citation>
    <scope>NUCLEOTIDE SEQUENCE [GENOMIC DNA]</scope>
    <source>
        <strain>205</strain>
    </source>
</reference>
<dbReference type="EC" id="7.1.1.9"/>
<dbReference type="EMBL" id="L19099">
    <property type="protein sequence ID" value="AAA53648.1"/>
    <property type="molecule type" value="Genomic_DNA"/>
</dbReference>
<dbReference type="SMR" id="P50671"/>
<dbReference type="UniPathway" id="UPA00705"/>
<dbReference type="GO" id="GO:0005743">
    <property type="term" value="C:mitochondrial inner membrane"/>
    <property type="evidence" value="ECO:0007669"/>
    <property type="project" value="UniProtKB-SubCell"/>
</dbReference>
<dbReference type="GO" id="GO:0004129">
    <property type="term" value="F:cytochrome-c oxidase activity"/>
    <property type="evidence" value="ECO:0007669"/>
    <property type="project" value="UniProtKB-EC"/>
</dbReference>
<dbReference type="GO" id="GO:0020037">
    <property type="term" value="F:heme binding"/>
    <property type="evidence" value="ECO:0007669"/>
    <property type="project" value="InterPro"/>
</dbReference>
<dbReference type="GO" id="GO:0046872">
    <property type="term" value="F:metal ion binding"/>
    <property type="evidence" value="ECO:0007669"/>
    <property type="project" value="UniProtKB-KW"/>
</dbReference>
<dbReference type="GO" id="GO:0015990">
    <property type="term" value="P:electron transport coupled proton transport"/>
    <property type="evidence" value="ECO:0007669"/>
    <property type="project" value="TreeGrafter"/>
</dbReference>
<dbReference type="GO" id="GO:0006123">
    <property type="term" value="P:mitochondrial electron transport, cytochrome c to oxygen"/>
    <property type="evidence" value="ECO:0007669"/>
    <property type="project" value="TreeGrafter"/>
</dbReference>
<dbReference type="Gene3D" id="1.20.210.10">
    <property type="entry name" value="Cytochrome c oxidase-like, subunit I domain"/>
    <property type="match status" value="1"/>
</dbReference>
<dbReference type="InterPro" id="IPR023616">
    <property type="entry name" value="Cyt_c_oxase-like_su1_dom"/>
</dbReference>
<dbReference type="InterPro" id="IPR036927">
    <property type="entry name" value="Cyt_c_oxase-like_su1_sf"/>
</dbReference>
<dbReference type="InterPro" id="IPR000883">
    <property type="entry name" value="Cyt_C_Oxase_1"/>
</dbReference>
<dbReference type="PANTHER" id="PTHR10422">
    <property type="entry name" value="CYTOCHROME C OXIDASE SUBUNIT 1"/>
    <property type="match status" value="1"/>
</dbReference>
<dbReference type="PANTHER" id="PTHR10422:SF18">
    <property type="entry name" value="CYTOCHROME C OXIDASE SUBUNIT 1"/>
    <property type="match status" value="1"/>
</dbReference>
<dbReference type="Pfam" id="PF00115">
    <property type="entry name" value="COX1"/>
    <property type="match status" value="1"/>
</dbReference>
<dbReference type="PRINTS" id="PR01165">
    <property type="entry name" value="CYCOXIDASEI"/>
</dbReference>
<dbReference type="SUPFAM" id="SSF81442">
    <property type="entry name" value="Cytochrome c oxidase subunit I-like"/>
    <property type="match status" value="1"/>
</dbReference>
<dbReference type="PROSITE" id="PS50855">
    <property type="entry name" value="COX1"/>
    <property type="match status" value="1"/>
</dbReference>
<keyword id="KW-0186">Copper</keyword>
<keyword id="KW-0249">Electron transport</keyword>
<keyword id="KW-0349">Heme</keyword>
<keyword id="KW-0408">Iron</keyword>
<keyword id="KW-0460">Magnesium</keyword>
<keyword id="KW-0472">Membrane</keyword>
<keyword id="KW-0479">Metal-binding</keyword>
<keyword id="KW-0496">Mitochondrion</keyword>
<keyword id="KW-0999">Mitochondrion inner membrane</keyword>
<keyword id="KW-0679">Respiratory chain</keyword>
<keyword id="KW-1278">Translocase</keyword>
<keyword id="KW-0812">Transmembrane</keyword>
<keyword id="KW-1133">Transmembrane helix</keyword>
<keyword id="KW-0813">Transport</keyword>
<proteinExistence type="inferred from homology"/>
<comment type="function">
    <text evidence="2">Component of the cytochrome c oxidase, the last enzyme in the mitochondrial electron transport chain which drives oxidative phosphorylation. The respiratory chain contains 3 multisubunit complexes succinate dehydrogenase (complex II, CII), ubiquinol-cytochrome c oxidoreductase (cytochrome b-c1 complex, complex III, CIII) and cytochrome c oxidase (complex IV, CIV), that cooperate to transfer electrons derived from NADH and succinate to molecular oxygen, creating an electrochemical gradient over the inner membrane that drives transmembrane transport and the ATP synthase. Cytochrome c oxidase is the component of the respiratory chain that catalyzes the reduction of oxygen to water. Electrons originating from reduced cytochrome c in the intermembrane space (IMS) are transferred via the dinuclear copper A center (CU(A)) of subunit 2 and heme A of subunit 1 to the active site in subunit 1, a binuclear center (BNC) formed by heme A3 and copper B (CU(B)). The BNC reduces molecular oxygen to 2 water molecules using 4 electrons from cytochrome c in the IMS and 4 protons from the mitochondrial matrix.</text>
</comment>
<comment type="catalytic activity">
    <reaction evidence="2">
        <text>4 Fe(II)-[cytochrome c] + O2 + 8 H(+)(in) = 4 Fe(III)-[cytochrome c] + 2 H2O + 4 H(+)(out)</text>
        <dbReference type="Rhea" id="RHEA:11436"/>
        <dbReference type="Rhea" id="RHEA-COMP:10350"/>
        <dbReference type="Rhea" id="RHEA-COMP:14399"/>
        <dbReference type="ChEBI" id="CHEBI:15377"/>
        <dbReference type="ChEBI" id="CHEBI:15378"/>
        <dbReference type="ChEBI" id="CHEBI:15379"/>
        <dbReference type="ChEBI" id="CHEBI:29033"/>
        <dbReference type="ChEBI" id="CHEBI:29034"/>
        <dbReference type="EC" id="7.1.1.9"/>
    </reaction>
    <physiologicalReaction direction="left-to-right" evidence="2">
        <dbReference type="Rhea" id="RHEA:11437"/>
    </physiologicalReaction>
</comment>
<comment type="cofactor">
    <cofactor evidence="2">
        <name>heme</name>
        <dbReference type="ChEBI" id="CHEBI:30413"/>
    </cofactor>
    <text evidence="2">Binds 2 heme A groups non-covalently per subunit.</text>
</comment>
<comment type="cofactor">
    <cofactor evidence="2">
        <name>Cu cation</name>
        <dbReference type="ChEBI" id="CHEBI:23378"/>
    </cofactor>
    <text evidence="2">Binds a copper B center.</text>
</comment>
<comment type="pathway">
    <text evidence="2">Energy metabolism; oxidative phosphorylation.</text>
</comment>
<comment type="subunit">
    <text evidence="2">Component of the cytochrome c oxidase (complex IV, CIV), a multisubunit enzyme composed of a catalytic core of 3 subunits and several supernumerary subunits. The complex exists as a monomer or a dimer and forms supercomplexes (SCs) in the inner mitochondrial membrane with ubiquinol-cytochrome c oxidoreductase (cytochrome b-c1 complex, complex III, CIII).</text>
</comment>
<comment type="subcellular location">
    <subcellularLocation>
        <location evidence="2">Mitochondrion inner membrane</location>
        <topology evidence="2">Multi-pass membrane protein</topology>
    </subcellularLocation>
</comment>
<comment type="similarity">
    <text evidence="4">Belongs to the heme-copper respiratory oxidase family.</text>
</comment>
<name>COX1_CHORO</name>
<evidence type="ECO:0000250" key="1">
    <source>
        <dbReference type="UniProtKB" id="P00396"/>
    </source>
</evidence>
<evidence type="ECO:0000250" key="2">
    <source>
        <dbReference type="UniProtKB" id="P00401"/>
    </source>
</evidence>
<evidence type="ECO:0000255" key="3"/>
<evidence type="ECO:0000305" key="4"/>
<protein>
    <recommendedName>
        <fullName>Cytochrome c oxidase subunit 1</fullName>
        <ecNumber>7.1.1.9</ecNumber>
    </recommendedName>
    <alternativeName>
        <fullName>Cytochrome c oxidase polypeptide I</fullName>
    </alternativeName>
</protein>
<organism>
    <name type="scientific">Choristoneura rosaceana</name>
    <name type="common">Oblique banded leafroller</name>
    <dbReference type="NCBI Taxonomy" id="27543"/>
    <lineage>
        <taxon>Eukaryota</taxon>
        <taxon>Metazoa</taxon>
        <taxon>Ecdysozoa</taxon>
        <taxon>Arthropoda</taxon>
        <taxon>Hexapoda</taxon>
        <taxon>Insecta</taxon>
        <taxon>Pterygota</taxon>
        <taxon>Neoptera</taxon>
        <taxon>Endopterygota</taxon>
        <taxon>Lepidoptera</taxon>
        <taxon>Glossata</taxon>
        <taxon>Ditrysia</taxon>
        <taxon>Tortricoidea</taxon>
        <taxon>Tortricidae</taxon>
        <taxon>Tortricinae</taxon>
        <taxon>Choristoneura</taxon>
    </lineage>
</organism>
<accession>P50671</accession>
<sequence length="274" mass="30928">PEVYILILPGFGMISHIISQESGKKETFGCLGMIYAMMAIGLLGFVVWAHHMFTVGMDIDTRAYFTSATMIIAVPTGIKIFSWLATLHGTQINYSPSMLWSLGFVFLFTVGGLTGVILANSSIDVTLHDTYYVVAHFHYVLSMGAVFAIMGGFVHWYPLFTGLAMNPYLLKIQFFTMFIGVNLTFFPQHFLGLAGMPRRYSDYPDIYTSWNIISSLGSYISLIATMLMLMIIWESLINKRIILFPLNMNSSIEWYQNLPPAEHSYNELPILSNF</sequence>
<gene>
    <name type="primary">COI</name>
</gene>